<proteinExistence type="inferred from homology"/>
<accession>Q6EYJ0</accession>
<protein>
    <recommendedName>
        <fullName evidence="1">Protein PsbN</fullName>
    </recommendedName>
</protein>
<feature type="chain" id="PRO_0000207899" description="Protein PsbN">
    <location>
        <begin position="1"/>
        <end position="43"/>
    </location>
</feature>
<feature type="transmembrane region" description="Helical" evidence="1">
    <location>
        <begin position="3"/>
        <end position="23"/>
    </location>
</feature>
<reference key="1">
    <citation type="submission" date="2002-07" db="EMBL/GenBank/DDBJ databases">
        <title>Parsing out signal and noise for seed-plant phylogenetic inference.</title>
        <authorList>
            <person name="Graham S.W."/>
            <person name="Rai H.S."/>
            <person name="Ikegami K."/>
            <person name="Reeves P.A."/>
            <person name="Olmstead R.G."/>
        </authorList>
    </citation>
    <scope>NUCLEOTIDE SEQUENCE [GENOMIC DNA]</scope>
</reference>
<sequence>MEIATLVAIFISGLLVSFTGYALYTAFGQPSQQLRDPFEEHGD</sequence>
<gene>
    <name evidence="1" type="primary">psbN</name>
</gene>
<name>PSBN_EUOAL</name>
<evidence type="ECO:0000255" key="1">
    <source>
        <dbReference type="HAMAP-Rule" id="MF_00293"/>
    </source>
</evidence>
<organism>
    <name type="scientific">Euonymus alatus</name>
    <name type="common">Burning bush</name>
    <name type="synonym">Celastrus alatus</name>
    <dbReference type="NCBI Taxonomy" id="4307"/>
    <lineage>
        <taxon>Eukaryota</taxon>
        <taxon>Viridiplantae</taxon>
        <taxon>Streptophyta</taxon>
        <taxon>Embryophyta</taxon>
        <taxon>Tracheophyta</taxon>
        <taxon>Spermatophyta</taxon>
        <taxon>Magnoliopsida</taxon>
        <taxon>eudicotyledons</taxon>
        <taxon>Gunneridae</taxon>
        <taxon>Pentapetalae</taxon>
        <taxon>rosids</taxon>
        <taxon>fabids</taxon>
        <taxon>Celastrales</taxon>
        <taxon>Celastraceae</taxon>
        <taxon>Euonymus</taxon>
    </lineage>
</organism>
<comment type="function">
    <text evidence="1">May play a role in photosystem I and II biogenesis.</text>
</comment>
<comment type="subcellular location">
    <subcellularLocation>
        <location evidence="1">Plastid</location>
        <location evidence="1">Chloroplast thylakoid membrane</location>
        <topology evidence="1">Single-pass membrane protein</topology>
    </subcellularLocation>
</comment>
<comment type="similarity">
    <text evidence="1">Belongs to the PsbN family.</text>
</comment>
<comment type="caution">
    <text evidence="1">Originally thought to be a component of PSII; based on experiments in Synechocystis, N.tabacum and barley, and its absence from PSII in T.elongatus and T.vulcanus, this is probably not true.</text>
</comment>
<dbReference type="EMBL" id="AF528899">
    <property type="protein sequence ID" value="AAQ09383.1"/>
    <property type="molecule type" value="Genomic_DNA"/>
</dbReference>
<dbReference type="SMR" id="Q6EYJ0"/>
<dbReference type="GO" id="GO:0009535">
    <property type="term" value="C:chloroplast thylakoid membrane"/>
    <property type="evidence" value="ECO:0007669"/>
    <property type="project" value="UniProtKB-SubCell"/>
</dbReference>
<dbReference type="GO" id="GO:0015979">
    <property type="term" value="P:photosynthesis"/>
    <property type="evidence" value="ECO:0007669"/>
    <property type="project" value="InterPro"/>
</dbReference>
<dbReference type="HAMAP" id="MF_00293">
    <property type="entry name" value="PSII_PsbN"/>
    <property type="match status" value="1"/>
</dbReference>
<dbReference type="InterPro" id="IPR003398">
    <property type="entry name" value="PSII_PsbN"/>
</dbReference>
<dbReference type="PANTHER" id="PTHR35326">
    <property type="entry name" value="PROTEIN PSBN"/>
    <property type="match status" value="1"/>
</dbReference>
<dbReference type="PANTHER" id="PTHR35326:SF3">
    <property type="entry name" value="PROTEIN PSBN"/>
    <property type="match status" value="1"/>
</dbReference>
<dbReference type="Pfam" id="PF02468">
    <property type="entry name" value="PsbN"/>
    <property type="match status" value="1"/>
</dbReference>
<geneLocation type="chloroplast"/>
<keyword id="KW-0150">Chloroplast</keyword>
<keyword id="KW-0472">Membrane</keyword>
<keyword id="KW-0934">Plastid</keyword>
<keyword id="KW-0793">Thylakoid</keyword>
<keyword id="KW-0812">Transmembrane</keyword>
<keyword id="KW-1133">Transmembrane helix</keyword>